<gene>
    <name evidence="1" type="primary">mshB</name>
    <name type="ordered locus">MAB_1316</name>
</gene>
<feature type="chain" id="PRO_0000400192" description="1D-myo-inositol 2-acetamido-2-deoxy-alpha-D-glucopyranoside deacetylase">
    <location>
        <begin position="1"/>
        <end position="279"/>
    </location>
</feature>
<feature type="binding site" evidence="1">
    <location>
        <position position="12"/>
    </location>
    <ligand>
        <name>Zn(2+)</name>
        <dbReference type="ChEBI" id="CHEBI:29105"/>
    </ligand>
</feature>
<feature type="binding site" evidence="1">
    <location>
        <position position="15"/>
    </location>
    <ligand>
        <name>Zn(2+)</name>
        <dbReference type="ChEBI" id="CHEBI:29105"/>
    </ligand>
</feature>
<feature type="binding site" evidence="1">
    <location>
        <position position="146"/>
    </location>
    <ligand>
        <name>Zn(2+)</name>
        <dbReference type="ChEBI" id="CHEBI:29105"/>
    </ligand>
</feature>
<comment type="function">
    <text evidence="1">Catalyzes the deacetylation of 1D-myo-inositol 2-acetamido-2-deoxy-alpha-D-glucopyranoside (GlcNAc-Ins) in the mycothiol biosynthesis pathway.</text>
</comment>
<comment type="catalytic activity">
    <reaction evidence="1">
        <text>1D-myo-inositol 2-acetamido-2-deoxy-alpha-D-glucopyranoside + H2O = 1D-myo-inositol 2-amino-2-deoxy-alpha-D-glucopyranoside + acetate</text>
        <dbReference type="Rhea" id="RHEA:26180"/>
        <dbReference type="ChEBI" id="CHEBI:15377"/>
        <dbReference type="ChEBI" id="CHEBI:30089"/>
        <dbReference type="ChEBI" id="CHEBI:52442"/>
        <dbReference type="ChEBI" id="CHEBI:58886"/>
        <dbReference type="EC" id="3.5.1.103"/>
    </reaction>
</comment>
<comment type="cofactor">
    <cofactor evidence="1">
        <name>Zn(2+)</name>
        <dbReference type="ChEBI" id="CHEBI:29105"/>
    </cofactor>
    <text evidence="1">Binds 1 zinc ion per subunit.</text>
</comment>
<comment type="similarity">
    <text evidence="1">Belongs to the MshB deacetylase family.</text>
</comment>
<organism>
    <name type="scientific">Mycobacteroides abscessus (strain ATCC 19977 / DSM 44196 / CCUG 20993 / CIP 104536 / JCM 13569 / NCTC 13031 / TMC 1543 / L948)</name>
    <name type="common">Mycobacterium abscessus</name>
    <dbReference type="NCBI Taxonomy" id="561007"/>
    <lineage>
        <taxon>Bacteria</taxon>
        <taxon>Bacillati</taxon>
        <taxon>Actinomycetota</taxon>
        <taxon>Actinomycetes</taxon>
        <taxon>Mycobacteriales</taxon>
        <taxon>Mycobacteriaceae</taxon>
        <taxon>Mycobacteroides</taxon>
        <taxon>Mycobacteroides abscessus</taxon>
    </lineage>
</organism>
<reference key="1">
    <citation type="journal article" date="2009" name="PLoS ONE">
        <title>Non mycobacterial virulence genes in the genome of the emerging pathogen Mycobacterium abscessus.</title>
        <authorList>
            <person name="Ripoll F."/>
            <person name="Pasek S."/>
            <person name="Schenowitz C."/>
            <person name="Dossat C."/>
            <person name="Barbe V."/>
            <person name="Rottman M."/>
            <person name="Macheras E."/>
            <person name="Heym B."/>
            <person name="Herrmann J.L."/>
            <person name="Daffe M."/>
            <person name="Brosch R."/>
            <person name="Risler J.L."/>
            <person name="Gaillard J.L."/>
        </authorList>
    </citation>
    <scope>NUCLEOTIDE SEQUENCE [LARGE SCALE GENOMIC DNA]</scope>
    <source>
        <strain>ATCC 19977 / DSM 44196 / CCUG 20993 / CIP 104536 / JCM 13569 / NCTC 13031 / TMC 1543 / L948</strain>
    </source>
</reference>
<keyword id="KW-0378">Hydrolase</keyword>
<keyword id="KW-0479">Metal-binding</keyword>
<keyword id="KW-1185">Reference proteome</keyword>
<keyword id="KW-0862">Zinc</keyword>
<evidence type="ECO:0000255" key="1">
    <source>
        <dbReference type="HAMAP-Rule" id="MF_01696"/>
    </source>
</evidence>
<proteinExistence type="inferred from homology"/>
<name>MSHB_MYCA9</name>
<protein>
    <recommendedName>
        <fullName evidence="1">1D-myo-inositol 2-acetamido-2-deoxy-alpha-D-glucopyranoside deacetylase</fullName>
        <shortName evidence="1">GlcNAc-Ins deacetylase</shortName>
        <ecNumber evidence="1">3.5.1.103</ecNumber>
    </recommendedName>
    <alternativeName>
        <fullName>N-acetyl-1-D-myo-inositol 2-amino-2-deoxy-alpha-D-glucopyranoside deacetylase</fullName>
    </alternativeName>
</protein>
<sequence length="279" mass="29483">MTTRRLMLVHAHPDDESLTTGGTIARYAAEGADVQLVTCTLGEEGEVIGDRWAQLAVDQADQLGGYRIGELSTALRHLGVDGPTFLGGAGRWRDSGMADTTPLHPRAFAGADLNEAVGALTALIDEHRPHVVVTYDPFGGYGHPDHIQAHTVTTAAVEKASWQVAKLYWTVIATSALETGLASITQLPPGCQPAPLDLIPTFADEKISAAIDVSGHREAKVAALRAHATQLTVSDDGSSMALSNLIALPIADIEHFVLVRGEPGVDTGWESDLFAGVEL</sequence>
<dbReference type="EC" id="3.5.1.103" evidence="1"/>
<dbReference type="EMBL" id="CU458896">
    <property type="protein sequence ID" value="CAM61404.1"/>
    <property type="molecule type" value="Genomic_DNA"/>
</dbReference>
<dbReference type="RefSeq" id="WP_005088014.1">
    <property type="nucleotide sequence ID" value="NZ_MLCG01000002.1"/>
</dbReference>
<dbReference type="SMR" id="B1MLH7"/>
<dbReference type="GeneID" id="93378262"/>
<dbReference type="KEGG" id="mab:MAB_1316"/>
<dbReference type="Proteomes" id="UP000007137">
    <property type="component" value="Chromosome"/>
</dbReference>
<dbReference type="GO" id="GO:0035595">
    <property type="term" value="F:N-acetylglucosaminylinositol deacetylase activity"/>
    <property type="evidence" value="ECO:0007669"/>
    <property type="project" value="UniProtKB-EC"/>
</dbReference>
<dbReference type="GO" id="GO:0008270">
    <property type="term" value="F:zinc ion binding"/>
    <property type="evidence" value="ECO:0007669"/>
    <property type="project" value="UniProtKB-UniRule"/>
</dbReference>
<dbReference type="GO" id="GO:0010125">
    <property type="term" value="P:mycothiol biosynthetic process"/>
    <property type="evidence" value="ECO:0007669"/>
    <property type="project" value="UniProtKB-UniRule"/>
</dbReference>
<dbReference type="Gene3D" id="3.40.50.10320">
    <property type="entry name" value="LmbE-like"/>
    <property type="match status" value="1"/>
</dbReference>
<dbReference type="HAMAP" id="MF_01696">
    <property type="entry name" value="MshB"/>
    <property type="match status" value="1"/>
</dbReference>
<dbReference type="InterPro" id="IPR003737">
    <property type="entry name" value="GlcNAc_PI_deacetylase-related"/>
</dbReference>
<dbReference type="InterPro" id="IPR024078">
    <property type="entry name" value="LmbE-like_dom_sf"/>
</dbReference>
<dbReference type="InterPro" id="IPR017810">
    <property type="entry name" value="Mycothiol_biosynthesis_MshB"/>
</dbReference>
<dbReference type="NCBIfam" id="TIGR03445">
    <property type="entry name" value="mycothiol_MshB"/>
    <property type="match status" value="1"/>
</dbReference>
<dbReference type="PANTHER" id="PTHR12993:SF26">
    <property type="entry name" value="1D-MYO-INOSITOL 2-ACETAMIDO-2-DEOXY-ALPHA-D-GLUCOPYRANOSIDE DEACETYLASE"/>
    <property type="match status" value="1"/>
</dbReference>
<dbReference type="PANTHER" id="PTHR12993">
    <property type="entry name" value="N-ACETYLGLUCOSAMINYL-PHOSPHATIDYLINOSITOL DE-N-ACETYLASE-RELATED"/>
    <property type="match status" value="1"/>
</dbReference>
<dbReference type="Pfam" id="PF02585">
    <property type="entry name" value="PIG-L"/>
    <property type="match status" value="1"/>
</dbReference>
<dbReference type="SUPFAM" id="SSF102588">
    <property type="entry name" value="LmbE-like"/>
    <property type="match status" value="1"/>
</dbReference>
<accession>B1MLH7</accession>